<proteinExistence type="inferred from homology"/>
<reference key="1">
    <citation type="journal article" date="2005" name="Proc. Natl. Acad. Sci. U.S.A.">
        <title>Genome analysis of multiple pathogenic isolates of Streptococcus agalactiae: implications for the microbial 'pan-genome'.</title>
        <authorList>
            <person name="Tettelin H."/>
            <person name="Masignani V."/>
            <person name="Cieslewicz M.J."/>
            <person name="Donati C."/>
            <person name="Medini D."/>
            <person name="Ward N.L."/>
            <person name="Angiuoli S.V."/>
            <person name="Crabtree J."/>
            <person name="Jones A.L."/>
            <person name="Durkin A.S."/>
            <person name="DeBoy R.T."/>
            <person name="Davidsen T.M."/>
            <person name="Mora M."/>
            <person name="Scarselli M."/>
            <person name="Margarit y Ros I."/>
            <person name="Peterson J.D."/>
            <person name="Hauser C.R."/>
            <person name="Sundaram J.P."/>
            <person name="Nelson W.C."/>
            <person name="Madupu R."/>
            <person name="Brinkac L.M."/>
            <person name="Dodson R.J."/>
            <person name="Rosovitz M.J."/>
            <person name="Sullivan S.A."/>
            <person name="Daugherty S.C."/>
            <person name="Haft D.H."/>
            <person name="Selengut J."/>
            <person name="Gwinn M.L."/>
            <person name="Zhou L."/>
            <person name="Zafar N."/>
            <person name="Khouri H."/>
            <person name="Radune D."/>
            <person name="Dimitrov G."/>
            <person name="Watkins K."/>
            <person name="O'Connor K.J."/>
            <person name="Smith S."/>
            <person name="Utterback T.R."/>
            <person name="White O."/>
            <person name="Rubens C.E."/>
            <person name="Grandi G."/>
            <person name="Madoff L.C."/>
            <person name="Kasper D.L."/>
            <person name="Telford J.L."/>
            <person name="Wessels M.R."/>
            <person name="Rappuoli R."/>
            <person name="Fraser C.M."/>
        </authorList>
    </citation>
    <scope>NUCLEOTIDE SEQUENCE [LARGE SCALE GENOMIC DNA]</scope>
    <source>
        <strain>ATCC 27591 / A909 / CDC SS700</strain>
    </source>
</reference>
<keyword id="KW-0067">ATP-binding</keyword>
<keyword id="KW-0227">DNA damage</keyword>
<keyword id="KW-0234">DNA repair</keyword>
<keyword id="KW-0238">DNA-binding</keyword>
<keyword id="KW-0269">Exonuclease</keyword>
<keyword id="KW-0347">Helicase</keyword>
<keyword id="KW-0378">Hydrolase</keyword>
<keyword id="KW-0540">Nuclease</keyword>
<keyword id="KW-0547">Nucleotide-binding</keyword>
<protein>
    <recommendedName>
        <fullName evidence="1">ATP-dependent helicase/deoxyribonuclease subunit B</fullName>
        <ecNumber evidence="1">3.1.-.-</ecNumber>
    </recommendedName>
    <alternativeName>
        <fullName evidence="1">ATP-dependent helicase/nuclease subunit RexB</fullName>
    </alternativeName>
</protein>
<comment type="function">
    <text evidence="1">The heterodimer acts as both an ATP-dependent DNA helicase and an ATP-dependent, dual-direction single-stranded exonuclease. Recognizes the chi site generating a DNA molecule suitable for the initiation of homologous recombination. This subunit has 5' -&gt; 3' nuclease activity but not helicase activity.</text>
</comment>
<comment type="cofactor">
    <cofactor evidence="1">
        <name>Mg(2+)</name>
        <dbReference type="ChEBI" id="CHEBI:18420"/>
    </cofactor>
</comment>
<comment type="subunit">
    <text evidence="1">Heterodimer of AddA and RexB.</text>
</comment>
<comment type="miscellaneous">
    <text evidence="1">Despite having helicase-like domains, this subunit does not have helicase activity.</text>
</comment>
<comment type="similarity">
    <text evidence="1">Belongs to the helicase family. AddB/RexB type 2 subfamily.</text>
</comment>
<gene>
    <name evidence="1" type="primary">rexB</name>
    <name type="ordered locus">SAK_0996</name>
</gene>
<dbReference type="EC" id="3.1.-.-" evidence="1"/>
<dbReference type="EMBL" id="CP000114">
    <property type="protein sequence ID" value="ABA44736.1"/>
    <property type="molecule type" value="Genomic_DNA"/>
</dbReference>
<dbReference type="RefSeq" id="WP_000772298.1">
    <property type="nucleotide sequence ID" value="NC_007432.1"/>
</dbReference>
<dbReference type="SMR" id="Q3K1I5"/>
<dbReference type="KEGG" id="sak:SAK_0996"/>
<dbReference type="HOGENOM" id="CLU_007838_1_0_9"/>
<dbReference type="GO" id="GO:0008409">
    <property type="term" value="F:5'-3' exonuclease activity"/>
    <property type="evidence" value="ECO:0007669"/>
    <property type="project" value="UniProtKB-UniRule"/>
</dbReference>
<dbReference type="GO" id="GO:0005524">
    <property type="term" value="F:ATP binding"/>
    <property type="evidence" value="ECO:0007669"/>
    <property type="project" value="UniProtKB-UniRule"/>
</dbReference>
<dbReference type="GO" id="GO:0003690">
    <property type="term" value="F:double-stranded DNA binding"/>
    <property type="evidence" value="ECO:0007669"/>
    <property type="project" value="UniProtKB-UniRule"/>
</dbReference>
<dbReference type="GO" id="GO:0004386">
    <property type="term" value="F:helicase activity"/>
    <property type="evidence" value="ECO:0007669"/>
    <property type="project" value="UniProtKB-KW"/>
</dbReference>
<dbReference type="GO" id="GO:0016817">
    <property type="term" value="F:hydrolase activity, acting on acid anhydrides"/>
    <property type="evidence" value="ECO:0007669"/>
    <property type="project" value="InterPro"/>
</dbReference>
<dbReference type="GO" id="GO:0000724">
    <property type="term" value="P:double-strand break repair via homologous recombination"/>
    <property type="evidence" value="ECO:0007669"/>
    <property type="project" value="UniProtKB-UniRule"/>
</dbReference>
<dbReference type="Gene3D" id="3.90.320.10">
    <property type="match status" value="1"/>
</dbReference>
<dbReference type="Gene3D" id="3.40.50.300">
    <property type="entry name" value="P-loop containing nucleotide triphosphate hydrolases"/>
    <property type="match status" value="4"/>
</dbReference>
<dbReference type="HAMAP" id="MF_01453">
    <property type="entry name" value="AddB_type2"/>
    <property type="match status" value="1"/>
</dbReference>
<dbReference type="InterPro" id="IPR049035">
    <property type="entry name" value="ADDB_N"/>
</dbReference>
<dbReference type="InterPro" id="IPR014141">
    <property type="entry name" value="DNA_helicase_suRexB"/>
</dbReference>
<dbReference type="InterPro" id="IPR027417">
    <property type="entry name" value="P-loop_NTPase"/>
</dbReference>
<dbReference type="InterPro" id="IPR011604">
    <property type="entry name" value="PDDEXK-like_dom_sf"/>
</dbReference>
<dbReference type="InterPro" id="IPR038726">
    <property type="entry name" value="PDDEXK_AddAB-type"/>
</dbReference>
<dbReference type="InterPro" id="IPR011335">
    <property type="entry name" value="Restrct_endonuc-II-like"/>
</dbReference>
<dbReference type="NCBIfam" id="TIGR02774">
    <property type="entry name" value="rexB_recomb"/>
    <property type="match status" value="1"/>
</dbReference>
<dbReference type="PANTHER" id="PTHR30591">
    <property type="entry name" value="RECBCD ENZYME SUBUNIT RECC"/>
    <property type="match status" value="1"/>
</dbReference>
<dbReference type="PANTHER" id="PTHR30591:SF1">
    <property type="entry name" value="RECBCD ENZYME SUBUNIT RECC"/>
    <property type="match status" value="1"/>
</dbReference>
<dbReference type="Pfam" id="PF21445">
    <property type="entry name" value="ADDB_N"/>
    <property type="match status" value="1"/>
</dbReference>
<dbReference type="Pfam" id="PF12705">
    <property type="entry name" value="PDDEXK_1"/>
    <property type="match status" value="1"/>
</dbReference>
<dbReference type="SUPFAM" id="SSF52540">
    <property type="entry name" value="P-loop containing nucleoside triphosphate hydrolases"/>
    <property type="match status" value="1"/>
</dbReference>
<dbReference type="SUPFAM" id="SSF52980">
    <property type="entry name" value="Restriction endonuclease-like"/>
    <property type="match status" value="1"/>
</dbReference>
<sequence>MKLLYTDINHDMTEILVNQAAHAAEAGWRIFYIAPNSLSFEKERAVLENLPQEASFAITITRFAQLARYFTLNQPNQKESLNDIGLAMIFYRALASFEDGQLKVFGRLKQDASFISQLVDLYKELQTANLSILELKYLHSPEKFEDLLAIFLVVSDLLREGEYDNQSKIAFFTEQVRSGQLDVDLKNTILIVDGFTRFSAEEEALIKSLSSRCQEIIIGAYASQKAYKANFTNGNIYSAGVDFLRYLATTFQTKPEFILSKWESKSGFEMISKNIEGKHDFTNSSHILDDTAKDCITIWECINQKDEVEHVARAIRQKLYQGYRYKDILVLLGDVDSYKLQLSKIFEQYDIPYYFGKAETMAAHPLVHFMDSLSRIKRYRFRAEDVLNLFKTGIYGEISQDDLDYFEAYISYADIKGPKKFFTDFVVGAKKFDLGRLNTIRQSLLTPLESFVKTKKQDGIKTLNQFMFFLTQVGLSDNLSRLVGQMSENEQEKHQEVWKTFTDILEQFQTIFGQEKLNLDEFLSLLNSGMMQAEYRMVPATVDVVTVKSYDLVEPHSNQFVYALGMTQSHFPKIAQNKSLISDIERQLINDANDTDGHFDIMTQENLKKNHFAALSLFNAAKQELVLTIPQLLNESEDQMSPYLVELRDIGVPFNHKGRQSLKEEADNIGNYKALLSRVVDLYRSAIDKEMTKEEQTFWSVAVRYLRRQLTSKGIEIPIITDSLDTVTVSSDVMTRRFPEDDPLKLSSSALTTFYNNQYKYFLQYVLGLEEQDSIHPDMRHHGTYLHRVFEILMKNQGIESFEEKLNSAINKTNQEDVFKSLYSEDAESRYSLEILEDIARATATILRQDSQMTVESEEERFELMIDNTIKINGIIDRIDRLSDGSLGVVDYKSSAQKFDIQKFYNGLSPQLVTYIDAISRDKEVEQKPPIFGAMYLHMQEPRQDLSKIKNLDDLVTKNHQALTYKGLFSEAEKEFLANGKYHLKDSLYSETEIAILQAHNQSLYKKASETIKSGKFLINPYTEDAKTVDGDQFKSITGFEADRHMARARALYKLPAKEKRQGFLTLMQQEEENDDL</sequence>
<feature type="chain" id="PRO_0000379387" description="ATP-dependent helicase/deoxyribonuclease subunit B">
    <location>
        <begin position="1"/>
        <end position="1077"/>
    </location>
</feature>
<evidence type="ECO:0000255" key="1">
    <source>
        <dbReference type="HAMAP-Rule" id="MF_01453"/>
    </source>
</evidence>
<accession>Q3K1I5</accession>
<name>ADDB_STRA1</name>
<organism>
    <name type="scientific">Streptococcus agalactiae serotype Ia (strain ATCC 27591 / A909 / CDC SS700)</name>
    <dbReference type="NCBI Taxonomy" id="205921"/>
    <lineage>
        <taxon>Bacteria</taxon>
        <taxon>Bacillati</taxon>
        <taxon>Bacillota</taxon>
        <taxon>Bacilli</taxon>
        <taxon>Lactobacillales</taxon>
        <taxon>Streptococcaceae</taxon>
        <taxon>Streptococcus</taxon>
    </lineage>
</organism>